<proteinExistence type="evidence at protein level"/>
<evidence type="ECO:0000250" key="1">
    <source>
        <dbReference type="UniProtKB" id="P04798"/>
    </source>
</evidence>
<evidence type="ECO:0000255" key="2"/>
<evidence type="ECO:0000255" key="3">
    <source>
        <dbReference type="PROSITE-ProRule" id="PRU00498"/>
    </source>
</evidence>
<evidence type="ECO:0000269" key="4">
    <source>
    </source>
</evidence>
<evidence type="ECO:0000303" key="5">
    <source>
    </source>
</evidence>
<evidence type="ECO:0000303" key="6">
    <source>
    </source>
</evidence>
<evidence type="ECO:0000305" key="7"/>
<sequence>MEPFTIFSLVVASLVFFACWALVAPNTSKNLPPGPPKLPIIGNIHQLKSPTPHRVLKDLAKKYGPIMHLQLGQVSTVVVSTPRLAQEIMKTNDISFADRPTTTTSQIFFYKAQDIGWAPYGEYWRQMKKICTLELLSAKKVRSFSSIREEELTRIRKILEFKAGTPINYTEMTIEMVNNVICKATLGDCCKDQALLIELLYDVLKTLSAFNLASYYPRLQFLNVISGKKAKWLKMQKRLDDIMEDILKEHRAKGRAKNSDQEDLVDVLLRIKDTGGLDINVTDEHVKAVVLDMLTAGTDTSSTTLEWAMTELMRNPDMMKRAQEEVRSVVKGEHVTETDLQSLHYLKLIVKETMRLHAPTPLLVPRECRQDCNVDGYDIPAKTKVLVNAWACGVDPGSWENPDSFIPERFENSSINFMGADFQYIPFGAGRRICPGLTFGLSMVEYPLAHFLYHFDWKLPYGMKPHELDITEITTISTSLKHHLKIVPFPKSSLAK</sequence>
<accession>X2JE85</accession>
<gene>
    <name evidence="7" type="primary">CYP71BL2</name>
    <name evidence="5" type="synonym">COS</name>
</gene>
<protein>
    <recommendedName>
        <fullName evidence="5">Costunolide synthase</fullName>
        <shortName evidence="5">TpCOS</shortName>
        <ecNumber evidence="4">1.14.14.150</ecNumber>
    </recommendedName>
    <alternativeName>
        <fullName evidence="7">Cytochrome P450 71BL2</fullName>
    </alternativeName>
</protein>
<organism>
    <name type="scientific">Tanacetum parthenium</name>
    <name type="common">Feverfew</name>
    <name type="synonym">Matricaria parthenium</name>
    <dbReference type="NCBI Taxonomy" id="127999"/>
    <lineage>
        <taxon>Eukaryota</taxon>
        <taxon>Viridiplantae</taxon>
        <taxon>Streptophyta</taxon>
        <taxon>Embryophyta</taxon>
        <taxon>Tracheophyta</taxon>
        <taxon>Spermatophyta</taxon>
        <taxon>Magnoliopsida</taxon>
        <taxon>eudicotyledons</taxon>
        <taxon>Gunneridae</taxon>
        <taxon>Pentapetalae</taxon>
        <taxon>asterids</taxon>
        <taxon>campanulids</taxon>
        <taxon>Asterales</taxon>
        <taxon>Asteraceae</taxon>
        <taxon>Asteroideae</taxon>
        <taxon>Anthemideae</taxon>
        <taxon>Anthemidinae</taxon>
        <taxon>Tanacetum</taxon>
    </lineage>
</organism>
<feature type="chain" id="PRO_5004949805" description="Costunolide synthase">
    <location>
        <begin position="1"/>
        <end position="496"/>
    </location>
</feature>
<feature type="transmembrane region" description="Helical; Signal-anchor for type II membrane protein" evidence="2">
    <location>
        <begin position="4"/>
        <end position="24"/>
    </location>
</feature>
<feature type="binding site" description="axial binding residue" evidence="1">
    <location>
        <position position="434"/>
    </location>
    <ligand>
        <name>heme</name>
        <dbReference type="ChEBI" id="CHEBI:30413"/>
    </ligand>
    <ligandPart>
        <name>Fe</name>
        <dbReference type="ChEBI" id="CHEBI:18248"/>
    </ligandPart>
</feature>
<feature type="glycosylation site" description="N-linked (GlcNAc...) asparagine" evidence="3">
    <location>
        <position position="26"/>
    </location>
</feature>
<feature type="glycosylation site" description="N-linked (GlcNAc...) asparagine" evidence="3">
    <location>
        <position position="168"/>
    </location>
</feature>
<feature type="glycosylation site" description="N-linked (GlcNAc...) asparagine" evidence="3">
    <location>
        <position position="280"/>
    </location>
</feature>
<feature type="glycosylation site" description="N-linked (GlcNAc...) asparagine" evidence="3">
    <location>
        <position position="412"/>
    </location>
</feature>
<dbReference type="EC" id="1.14.14.150" evidence="4"/>
<dbReference type="EMBL" id="KC964545">
    <property type="protein sequence ID" value="AHN62856.1"/>
    <property type="molecule type" value="mRNA"/>
</dbReference>
<dbReference type="SMR" id="X2JE85"/>
<dbReference type="GlyCosmos" id="X2JE85">
    <property type="glycosylation" value="4 sites, No reported glycans"/>
</dbReference>
<dbReference type="UniPathway" id="UPA00213"/>
<dbReference type="GO" id="GO:0016020">
    <property type="term" value="C:membrane"/>
    <property type="evidence" value="ECO:0007669"/>
    <property type="project" value="UniProtKB-SubCell"/>
</dbReference>
<dbReference type="GO" id="GO:0102934">
    <property type="term" value="F:costunolide synthase activity"/>
    <property type="evidence" value="ECO:0000314"/>
    <property type="project" value="UniProtKB"/>
</dbReference>
<dbReference type="GO" id="GO:0020037">
    <property type="term" value="F:heme binding"/>
    <property type="evidence" value="ECO:0007669"/>
    <property type="project" value="InterPro"/>
</dbReference>
<dbReference type="GO" id="GO:0005506">
    <property type="term" value="F:iron ion binding"/>
    <property type="evidence" value="ECO:0007669"/>
    <property type="project" value="InterPro"/>
</dbReference>
<dbReference type="GO" id="GO:0051762">
    <property type="term" value="P:sesquiterpene biosynthetic process"/>
    <property type="evidence" value="ECO:0000314"/>
    <property type="project" value="UniProtKB"/>
</dbReference>
<dbReference type="GO" id="GO:0016114">
    <property type="term" value="P:terpenoid biosynthetic process"/>
    <property type="evidence" value="ECO:0007669"/>
    <property type="project" value="UniProtKB-UniPathway"/>
</dbReference>
<dbReference type="CDD" id="cd11072">
    <property type="entry name" value="CYP71-like"/>
    <property type="match status" value="1"/>
</dbReference>
<dbReference type="FunFam" id="1.10.630.10:FF:000043">
    <property type="entry name" value="Cytochrome P450 99A2"/>
    <property type="match status" value="1"/>
</dbReference>
<dbReference type="Gene3D" id="1.10.630.10">
    <property type="entry name" value="Cytochrome P450"/>
    <property type="match status" value="1"/>
</dbReference>
<dbReference type="InterPro" id="IPR001128">
    <property type="entry name" value="Cyt_P450"/>
</dbReference>
<dbReference type="InterPro" id="IPR017972">
    <property type="entry name" value="Cyt_P450_CS"/>
</dbReference>
<dbReference type="InterPro" id="IPR002401">
    <property type="entry name" value="Cyt_P450_E_grp-I"/>
</dbReference>
<dbReference type="InterPro" id="IPR036396">
    <property type="entry name" value="Cyt_P450_sf"/>
</dbReference>
<dbReference type="PANTHER" id="PTHR47955:SF13">
    <property type="entry name" value="CYTOCHROME P450"/>
    <property type="match status" value="1"/>
</dbReference>
<dbReference type="PANTHER" id="PTHR47955">
    <property type="entry name" value="CYTOCHROME P450 FAMILY 71 PROTEIN"/>
    <property type="match status" value="1"/>
</dbReference>
<dbReference type="Pfam" id="PF00067">
    <property type="entry name" value="p450"/>
    <property type="match status" value="1"/>
</dbReference>
<dbReference type="PRINTS" id="PR00463">
    <property type="entry name" value="EP450I"/>
</dbReference>
<dbReference type="PRINTS" id="PR00385">
    <property type="entry name" value="P450"/>
</dbReference>
<dbReference type="SUPFAM" id="SSF48264">
    <property type="entry name" value="Cytochrome P450"/>
    <property type="match status" value="1"/>
</dbReference>
<dbReference type="PROSITE" id="PS00086">
    <property type="entry name" value="CYTOCHROME_P450"/>
    <property type="match status" value="1"/>
</dbReference>
<name>C7BL2_TANPA</name>
<comment type="function">
    <text evidence="4 6">Involved in the biosynthesis of germacrene-derived sesquiterpene lactones (PubMed:30468448). Component of the parthenolide biosynthetic pathway; parthenolide and conjugates are promising anti-cancer drugs highly active against colon cancer cells (PubMed:30468448). Hydroxylates germacrene A acid to 6-alpha-hydroxy-germacrene A acid, a precursor of sesquiterpene lactones that spontaneously undergoes a lactonization which yields costunolide (PubMed:24704560).</text>
</comment>
<comment type="catalytic activity">
    <reaction evidence="4">
        <text>germacra-1(10),4,11(13)-trien-12-oate + reduced [NADPH--hemoprotein reductase] + O2 = (+)-costunolide + oxidized [NADPH--hemoprotein reductase] + 2 H2O</text>
        <dbReference type="Rhea" id="RHEA:28230"/>
        <dbReference type="Rhea" id="RHEA-COMP:11964"/>
        <dbReference type="Rhea" id="RHEA-COMP:11965"/>
        <dbReference type="ChEBI" id="CHEBI:3900"/>
        <dbReference type="ChEBI" id="CHEBI:15377"/>
        <dbReference type="ChEBI" id="CHEBI:15379"/>
        <dbReference type="ChEBI" id="CHEBI:57618"/>
        <dbReference type="ChEBI" id="CHEBI:58210"/>
        <dbReference type="ChEBI" id="CHEBI:61301"/>
        <dbReference type="EC" id="1.14.14.150"/>
    </reaction>
</comment>
<comment type="cofactor">
    <cofactor evidence="1">
        <name>heme</name>
        <dbReference type="ChEBI" id="CHEBI:30413"/>
    </cofactor>
</comment>
<comment type="pathway">
    <text evidence="6">Secondary metabolite biosynthesis; terpenoid biosynthesis.</text>
</comment>
<comment type="subcellular location">
    <subcellularLocation>
        <location evidence="2">Membrane</location>
        <topology evidence="2">Single-pass type II membrane protein</topology>
    </subcellularLocation>
</comment>
<comment type="tissue specificity">
    <text evidence="4">Expressed in floral glandular trichomes.</text>
</comment>
<comment type="developmental stage">
    <text evidence="4">During ovary development, accumulates until the stage 3 and fades out progressively to disappear at stage 6.</text>
</comment>
<comment type="similarity">
    <text evidence="7">Belongs to the cytochrome P450 family.</text>
</comment>
<keyword id="KW-0325">Glycoprotein</keyword>
<keyword id="KW-0349">Heme</keyword>
<keyword id="KW-0408">Iron</keyword>
<keyword id="KW-0472">Membrane</keyword>
<keyword id="KW-0479">Metal-binding</keyword>
<keyword id="KW-0503">Monooxygenase</keyword>
<keyword id="KW-0560">Oxidoreductase</keyword>
<keyword id="KW-0735">Signal-anchor</keyword>
<keyword id="KW-0812">Transmembrane</keyword>
<keyword id="KW-1133">Transmembrane helix</keyword>
<reference key="1">
    <citation type="journal article" date="2014" name="Metab. Eng.">
        <title>Elucidation and in planta reconstitution of the parthenolide biosynthetic pathway.</title>
        <authorList>
            <person name="Liu Q."/>
            <person name="Manzano D."/>
            <person name="Tanic N."/>
            <person name="Pesic M."/>
            <person name="Bankovic J."/>
            <person name="Pateraki I."/>
            <person name="Ricard L."/>
            <person name="Ferrer A."/>
            <person name="de Vos R."/>
            <person name="van de Krol S."/>
            <person name="Bouwmeester H."/>
        </authorList>
    </citation>
    <scope>NUCLEOTIDE SEQUENCE [MRNA]</scope>
    <scope>FUNCTION</scope>
    <scope>CATALYTIC ACTIVITY</scope>
    <scope>TISSUE SPECIFICITY</scope>
    <scope>DEVELOPMENTAL STAGE</scope>
</reference>
<reference key="2">
    <citation type="journal article" date="2019" name="Nat. Prod. Rep.">
        <title>Non-volatile natural products in plant glandular trichomes: chemistry, biological activities and biosynthesis.</title>
        <authorList>
            <person name="Liu Y."/>
            <person name="Jing S.-X."/>
            <person name="Luo S.-H."/>
            <person name="Li S.-H."/>
        </authorList>
    </citation>
    <scope>PATHWAY</scope>
    <scope>REVIEW</scope>
</reference>